<organism>
    <name type="scientific">Drosophila melanogaster</name>
    <name type="common">Fruit fly</name>
    <dbReference type="NCBI Taxonomy" id="7227"/>
    <lineage>
        <taxon>Eukaryota</taxon>
        <taxon>Metazoa</taxon>
        <taxon>Ecdysozoa</taxon>
        <taxon>Arthropoda</taxon>
        <taxon>Hexapoda</taxon>
        <taxon>Insecta</taxon>
        <taxon>Pterygota</taxon>
        <taxon>Neoptera</taxon>
        <taxon>Endopterygota</taxon>
        <taxon>Diptera</taxon>
        <taxon>Brachycera</taxon>
        <taxon>Muscomorpha</taxon>
        <taxon>Ephydroidea</taxon>
        <taxon>Drosophilidae</taxon>
        <taxon>Drosophila</taxon>
        <taxon>Sophophora</taxon>
    </lineage>
</organism>
<reference evidence="16 19" key="1">
    <citation type="journal article" date="1996" name="Proc. Natl. Acad. Sci. U.S.A.">
        <title>Cloning of an arylalkylamine N-acetyltransferase (aaNAT1) from Drosophila melanogaster expressed in the nervous system and the gut.</title>
        <authorList>
            <person name="Hintermann E."/>
            <person name="Grieder N.C."/>
            <person name="Amherd R."/>
            <person name="Brodbeck D."/>
            <person name="Meyer U.A."/>
        </authorList>
    </citation>
    <scope>NUCLEOTIDE SEQUENCE [MRNA] (ISOFORM B)</scope>
    <scope>FUNCTION</scope>
    <scope>CATALYTIC ACTIVITY</scope>
    <scope>BIOPHYSICOCHEMICAL PROPERTIES</scope>
    <scope>PATHWAY</scope>
    <scope>DEVELOPMENTAL STAGE</scope>
    <scope>INDUCTION</scope>
    <source>
        <strain evidence="19">Canton-S</strain>
    </source>
</reference>
<reference evidence="16" key="2">
    <citation type="journal article" date="1998" name="DNA Cell Biol.">
        <title>Molecular and biochemical characterization of the aaNAT1 (Dat) locus in Drosophila melanogaster: differential expression of two gene products.</title>
        <authorList>
            <person name="Brodbeck D."/>
            <person name="Amherd R."/>
            <person name="Callaerts P."/>
            <person name="Hintermann E."/>
            <person name="Meyer U.A."/>
            <person name="Affolter M."/>
        </authorList>
    </citation>
    <scope>NUCLEOTIDE SEQUENCE [MRNA] (ISOFORM A)</scope>
    <scope>ALTERNATIVE SPLICING</scope>
    <scope>FUNCTION</scope>
    <scope>CATALYTIC ACTIVITY</scope>
    <scope>PATHWAY</scope>
    <scope>TISSUE SPECIFICITY</scope>
    <scope>DEVELOPMENTAL STAGE (ISOFORMS A AND B)</scope>
    <scope>INDUCTION</scope>
    <source>
        <strain evidence="11">Canton-S</strain>
    </source>
</reference>
<reference evidence="17" key="3">
    <citation type="journal article" date="2000" name="Science">
        <title>The genome sequence of Drosophila melanogaster.</title>
        <authorList>
            <person name="Adams M.D."/>
            <person name="Celniker S.E."/>
            <person name="Holt R.A."/>
            <person name="Evans C.A."/>
            <person name="Gocayne J.D."/>
            <person name="Amanatides P.G."/>
            <person name="Scherer S.E."/>
            <person name="Li P.W."/>
            <person name="Hoskins R.A."/>
            <person name="Galle R.F."/>
            <person name="George R.A."/>
            <person name="Lewis S.E."/>
            <person name="Richards S."/>
            <person name="Ashburner M."/>
            <person name="Henderson S.N."/>
            <person name="Sutton G.G."/>
            <person name="Wortman J.R."/>
            <person name="Yandell M.D."/>
            <person name="Zhang Q."/>
            <person name="Chen L.X."/>
            <person name="Brandon R.C."/>
            <person name="Rogers Y.-H.C."/>
            <person name="Blazej R.G."/>
            <person name="Champe M."/>
            <person name="Pfeiffer B.D."/>
            <person name="Wan K.H."/>
            <person name="Doyle C."/>
            <person name="Baxter E.G."/>
            <person name="Helt G."/>
            <person name="Nelson C.R."/>
            <person name="Miklos G.L.G."/>
            <person name="Abril J.F."/>
            <person name="Agbayani A."/>
            <person name="An H.-J."/>
            <person name="Andrews-Pfannkoch C."/>
            <person name="Baldwin D."/>
            <person name="Ballew R.M."/>
            <person name="Basu A."/>
            <person name="Baxendale J."/>
            <person name="Bayraktaroglu L."/>
            <person name="Beasley E.M."/>
            <person name="Beeson K.Y."/>
            <person name="Benos P.V."/>
            <person name="Berman B.P."/>
            <person name="Bhandari D."/>
            <person name="Bolshakov S."/>
            <person name="Borkova D."/>
            <person name="Botchan M.R."/>
            <person name="Bouck J."/>
            <person name="Brokstein P."/>
            <person name="Brottier P."/>
            <person name="Burtis K.C."/>
            <person name="Busam D.A."/>
            <person name="Butler H."/>
            <person name="Cadieu E."/>
            <person name="Center A."/>
            <person name="Chandra I."/>
            <person name="Cherry J.M."/>
            <person name="Cawley S."/>
            <person name="Dahlke C."/>
            <person name="Davenport L.B."/>
            <person name="Davies P."/>
            <person name="de Pablos B."/>
            <person name="Delcher A."/>
            <person name="Deng Z."/>
            <person name="Mays A.D."/>
            <person name="Dew I."/>
            <person name="Dietz S.M."/>
            <person name="Dodson K."/>
            <person name="Doup L.E."/>
            <person name="Downes M."/>
            <person name="Dugan-Rocha S."/>
            <person name="Dunkov B.C."/>
            <person name="Dunn P."/>
            <person name="Durbin K.J."/>
            <person name="Evangelista C.C."/>
            <person name="Ferraz C."/>
            <person name="Ferriera S."/>
            <person name="Fleischmann W."/>
            <person name="Fosler C."/>
            <person name="Gabrielian A.E."/>
            <person name="Garg N.S."/>
            <person name="Gelbart W.M."/>
            <person name="Glasser K."/>
            <person name="Glodek A."/>
            <person name="Gong F."/>
            <person name="Gorrell J.H."/>
            <person name="Gu Z."/>
            <person name="Guan P."/>
            <person name="Harris M."/>
            <person name="Harris N.L."/>
            <person name="Harvey D.A."/>
            <person name="Heiman T.J."/>
            <person name="Hernandez J.R."/>
            <person name="Houck J."/>
            <person name="Hostin D."/>
            <person name="Houston K.A."/>
            <person name="Howland T.J."/>
            <person name="Wei M.-H."/>
            <person name="Ibegwam C."/>
            <person name="Jalali M."/>
            <person name="Kalush F."/>
            <person name="Karpen G.H."/>
            <person name="Ke Z."/>
            <person name="Kennison J.A."/>
            <person name="Ketchum K.A."/>
            <person name="Kimmel B.E."/>
            <person name="Kodira C.D."/>
            <person name="Kraft C.L."/>
            <person name="Kravitz S."/>
            <person name="Kulp D."/>
            <person name="Lai Z."/>
            <person name="Lasko P."/>
            <person name="Lei Y."/>
            <person name="Levitsky A.A."/>
            <person name="Li J.H."/>
            <person name="Li Z."/>
            <person name="Liang Y."/>
            <person name="Lin X."/>
            <person name="Liu X."/>
            <person name="Mattei B."/>
            <person name="McIntosh T.C."/>
            <person name="McLeod M.P."/>
            <person name="McPherson D."/>
            <person name="Merkulov G."/>
            <person name="Milshina N.V."/>
            <person name="Mobarry C."/>
            <person name="Morris J."/>
            <person name="Moshrefi A."/>
            <person name="Mount S.M."/>
            <person name="Moy M."/>
            <person name="Murphy B."/>
            <person name="Murphy L."/>
            <person name="Muzny D.M."/>
            <person name="Nelson D.L."/>
            <person name="Nelson D.R."/>
            <person name="Nelson K.A."/>
            <person name="Nixon K."/>
            <person name="Nusskern D.R."/>
            <person name="Pacleb J.M."/>
            <person name="Palazzolo M."/>
            <person name="Pittman G.S."/>
            <person name="Pan S."/>
            <person name="Pollard J."/>
            <person name="Puri V."/>
            <person name="Reese M.G."/>
            <person name="Reinert K."/>
            <person name="Remington K."/>
            <person name="Saunders R.D.C."/>
            <person name="Scheeler F."/>
            <person name="Shen H."/>
            <person name="Shue B.C."/>
            <person name="Siden-Kiamos I."/>
            <person name="Simpson M."/>
            <person name="Skupski M.P."/>
            <person name="Smith T.J."/>
            <person name="Spier E."/>
            <person name="Spradling A.C."/>
            <person name="Stapleton M."/>
            <person name="Strong R."/>
            <person name="Sun E."/>
            <person name="Svirskas R."/>
            <person name="Tector C."/>
            <person name="Turner R."/>
            <person name="Venter E."/>
            <person name="Wang A.H."/>
            <person name="Wang X."/>
            <person name="Wang Z.-Y."/>
            <person name="Wassarman D.A."/>
            <person name="Weinstock G.M."/>
            <person name="Weissenbach J."/>
            <person name="Williams S.M."/>
            <person name="Woodage T."/>
            <person name="Worley K.C."/>
            <person name="Wu D."/>
            <person name="Yang S."/>
            <person name="Yao Q.A."/>
            <person name="Ye J."/>
            <person name="Yeh R.-F."/>
            <person name="Zaveri J.S."/>
            <person name="Zhan M."/>
            <person name="Zhang G."/>
            <person name="Zhao Q."/>
            <person name="Zheng L."/>
            <person name="Zheng X.H."/>
            <person name="Zhong F.N."/>
            <person name="Zhong W."/>
            <person name="Zhou X."/>
            <person name="Zhu S.C."/>
            <person name="Zhu X."/>
            <person name="Smith H.O."/>
            <person name="Gibbs R.A."/>
            <person name="Myers E.W."/>
            <person name="Rubin G.M."/>
            <person name="Venter J.C."/>
        </authorList>
    </citation>
    <scope>NUCLEOTIDE SEQUENCE [LARGE SCALE GENOMIC DNA]</scope>
    <source>
        <strain evidence="3">Berkeley</strain>
    </source>
</reference>
<reference evidence="16 17" key="4">
    <citation type="journal article" date="2002" name="Genome Biol.">
        <title>Annotation of the Drosophila melanogaster euchromatic genome: a systematic review.</title>
        <authorList>
            <person name="Misra S."/>
            <person name="Crosby M.A."/>
            <person name="Mungall C.J."/>
            <person name="Matthews B.B."/>
            <person name="Campbell K.S."/>
            <person name="Hradecky P."/>
            <person name="Huang Y."/>
            <person name="Kaminker J.S."/>
            <person name="Millburn G.H."/>
            <person name="Prochnik S.E."/>
            <person name="Smith C.D."/>
            <person name="Tupy J.L."/>
            <person name="Whitfield E.J."/>
            <person name="Bayraktaroglu L."/>
            <person name="Berman B.P."/>
            <person name="Bettencourt B.R."/>
            <person name="Celniker S.E."/>
            <person name="de Grey A.D.N.J."/>
            <person name="Drysdale R.A."/>
            <person name="Harris N.L."/>
            <person name="Richter J."/>
            <person name="Russo S."/>
            <person name="Schroeder A.J."/>
            <person name="Shu S.Q."/>
            <person name="Stapleton M."/>
            <person name="Yamada C."/>
            <person name="Ashburner M."/>
            <person name="Gelbart W.M."/>
            <person name="Rubin G.M."/>
            <person name="Lewis S.E."/>
        </authorList>
    </citation>
    <scope>GENOME REANNOTATION</scope>
    <scope>ALTERNATIVE SPLICING</scope>
    <source>
        <strain>Berkeley</strain>
    </source>
</reference>
<reference evidence="16 18" key="5">
    <citation type="journal article" date="2002" name="Genome Biol.">
        <title>A Drosophila full-length cDNA resource.</title>
        <authorList>
            <person name="Stapleton M."/>
            <person name="Carlson J.W."/>
            <person name="Brokstein P."/>
            <person name="Yu C."/>
            <person name="Champe M."/>
            <person name="George R.A."/>
            <person name="Guarin H."/>
            <person name="Kronmiller B."/>
            <person name="Pacleb J.M."/>
            <person name="Park S."/>
            <person name="Wan K.H."/>
            <person name="Rubin G.M."/>
            <person name="Celniker S.E."/>
        </authorList>
    </citation>
    <scope>NUCLEOTIDE SEQUENCE [LARGE SCALE MRNA] (ISOFORM A)</scope>
    <source>
        <strain evidence="4">Berkeley</strain>
        <tissue evidence="4">Head</tissue>
    </source>
</reference>
<reference evidence="16" key="6">
    <citation type="journal article" date="1995" name="FEBS Lett.">
        <title>Isolation and characterization of an arylalkylamine N-acetyltransferase from Drosophila melanogaster.</title>
        <authorList>
            <person name="Hintermann E."/>
            <person name="Jeno P."/>
            <person name="Meyer U.A."/>
        </authorList>
    </citation>
    <scope>PROTEIN SEQUENCE OF 51-70; 76-94 AND 99-102</scope>
    <scope>FUNCTION</scope>
    <scope>CATALYTIC ACTIVITY</scope>
    <scope>BIOPHYSICOCHEMICAL PROPERTIES</scope>
    <scope>PATHWAY</scope>
</reference>
<reference key="7">
    <citation type="journal article" date="2000" name="Science">
        <title>Correlates of sleep and waking in Drosophila melanogaster.</title>
        <authorList>
            <person name="Shaw P.J."/>
            <person name="Cirelli C."/>
            <person name="Greenspan R.J."/>
            <person name="Tononi G."/>
        </authorList>
    </citation>
    <scope>FUNCTION</scope>
    <scope>DISRUPTION PHENOTYPE (ISOFORM A)</scope>
</reference>
<reference key="8">
    <citation type="journal article" date="2014" name="Biochemistry">
        <title>Mechanistic and structural analysis of Drosophila melanogaster arylalkylamine N-acetyltransferases.</title>
        <authorList>
            <person name="Dempsey D.R."/>
            <person name="Jeffries K.A."/>
            <person name="Bond J.D."/>
            <person name="Carpenter A.M."/>
            <person name="Rodriguez-Ospina S."/>
            <person name="Breydo L."/>
            <person name="Caswell K.K."/>
            <person name="Merkler D.J."/>
        </authorList>
    </citation>
    <scope>FUNCTION</scope>
    <scope>CATALYTIC ACTIVITY</scope>
    <scope>ACTIVITY REGULATION</scope>
    <scope>BIOPHYSICOCHEMICAL PROPERTIES (ISOFORMS A AND B)</scope>
    <scope>PATHWAY</scope>
    <scope>MUTAGENESIS OF GLU-82; PRO-83; TYR-99; ASP-177; ARG-188; HIS-213; CYS-216; SER-217; SER-221 AND HIS-255</scope>
</reference>
<reference key="9">
    <citation type="journal article" date="2020" name="Elife">
        <title>AANAT1 functions in astrocytes to regulate sleep homeostasis.</title>
        <authorList>
            <person name="Davla S."/>
            <person name="Artiushin G."/>
            <person name="Li Y."/>
            <person name="Chitsaz D."/>
            <person name="Li S."/>
            <person name="Sehgal A."/>
            <person name="van Meyel D.J."/>
        </authorList>
    </citation>
    <scope>FUNCTION</scope>
    <scope>SUBCELLULAR LOCATION</scope>
    <scope>TISSUE SPECIFICITY</scope>
    <scope>DEVELOPMENTAL STAGE</scope>
    <scope>DISRUPTION PHENOTYPE</scope>
    <scope>DISRUPTION PHENOTYPE (ISOFORM A)</scope>
</reference>
<reference evidence="21" key="10">
    <citation type="journal article" date="2012" name="Biochem. J.">
        <title>Crystal structure of the dopamine N-acetyltransferase-acetyl-CoA complex provides insights into the catalytic mechanism.</title>
        <authorList>
            <person name="Cheng K.C."/>
            <person name="Liao J.N."/>
            <person name="Lyu P.C."/>
        </authorList>
    </citation>
    <scope>X-RAY CRYSTALLOGRAPHY (1.46 ANGSTROMS) OF 56-265 IN COMPLEX WITH ACETYL-COA</scope>
    <scope>CATALYTIC ACTIVITY</scope>
    <scope>BIOPHYSICOCHEMICAL PROPERTIES</scope>
    <scope>MUTAGENESIS OF GLU-82; SER-217; SER-221 AND TYR-241</scope>
</reference>
<reference key="11">
    <citation type="journal article" date="2020" name="G3 (Bethesda)">
        <title>speck, First Identified in Drosophila melanogaster in 1910, Is Encoded by the Arylalkalamine N-Acetyltransferase (AANAT1) Gene.</title>
        <authorList>
            <person name="Spana E.P."/>
            <person name="Abrams A.B."/>
            <person name="Ellis K.T."/>
            <person name="Klein J.C."/>
            <person name="Ruderman B.T."/>
            <person name="Shi A.H."/>
            <person name="Zhu D."/>
            <person name="Stewart A."/>
            <person name="May S."/>
        </authorList>
    </citation>
    <scope>DISRUPTION PHENOTYPE</scope>
</reference>
<proteinExistence type="evidence at protein level"/>
<gene>
    <name evidence="13 20" type="primary">speck</name>
    <name evidence="14" type="synonym">AANAT1</name>
    <name evidence="15" type="synonym">Dat</name>
    <name evidence="19" type="synonym">NAT1</name>
    <name evidence="20" type="ORF">CG3318</name>
</gene>
<accession>Q94521</accession>
<accession>Q8MKK2</accession>
<accession>Q9TWF1</accession>
<protein>
    <recommendedName>
        <fullName evidence="14">Arylalkylamine N-acetyltransferase 1</fullName>
        <ecNumber evidence="5 6 9 10 11">2.3.1.87</ecNumber>
    </recommendedName>
    <alternativeName>
        <fullName evidence="16">Dopamine N-acetyltransferase</fullName>
    </alternativeName>
</protein>
<evidence type="ECO:0000255" key="1">
    <source>
        <dbReference type="PROSITE-ProRule" id="PRU00532"/>
    </source>
</evidence>
<evidence type="ECO:0000269" key="2">
    <source>
    </source>
</evidence>
<evidence type="ECO:0000269" key="3">
    <source>
    </source>
</evidence>
<evidence type="ECO:0000269" key="4">
    <source>
    </source>
</evidence>
<evidence type="ECO:0000269" key="5">
    <source>
    </source>
</evidence>
<evidence type="ECO:0000269" key="6">
    <source>
    </source>
</evidence>
<evidence type="ECO:0000269" key="7">
    <source>
    </source>
</evidence>
<evidence type="ECO:0000269" key="8">
    <source>
    </source>
</evidence>
<evidence type="ECO:0000269" key="9">
    <source>
    </source>
</evidence>
<evidence type="ECO:0000269" key="10">
    <source>
    </source>
</evidence>
<evidence type="ECO:0000269" key="11">
    <source>
    </source>
</evidence>
<evidence type="ECO:0000303" key="12">
    <source>
    </source>
</evidence>
<evidence type="ECO:0000303" key="13">
    <source>
    </source>
</evidence>
<evidence type="ECO:0000303" key="14">
    <source>
    </source>
</evidence>
<evidence type="ECO:0000303" key="15">
    <source>
    </source>
</evidence>
<evidence type="ECO:0000305" key="16"/>
<evidence type="ECO:0000312" key="17">
    <source>
        <dbReference type="EMBL" id="AAF47172.1"/>
    </source>
</evidence>
<evidence type="ECO:0000312" key="18">
    <source>
        <dbReference type="EMBL" id="AAM50640.1"/>
    </source>
</evidence>
<evidence type="ECO:0000312" key="19">
    <source>
        <dbReference type="EMBL" id="CAA69262.1"/>
    </source>
</evidence>
<evidence type="ECO:0000312" key="20">
    <source>
        <dbReference type="FlyBase" id="FBgn0287831"/>
    </source>
</evidence>
<evidence type="ECO:0007744" key="21">
    <source>
        <dbReference type="PDB" id="3TE4"/>
    </source>
</evidence>
<evidence type="ECO:0007829" key="22">
    <source>
        <dbReference type="PDB" id="5GI5"/>
    </source>
</evidence>
<evidence type="ECO:0007829" key="23">
    <source>
        <dbReference type="PDB" id="5GI7"/>
    </source>
</evidence>
<feature type="chain" id="PRO_0000417450" description="Arylalkylamine N-acetyltransferase 1">
    <location>
        <begin position="1"/>
        <end position="275"/>
    </location>
</feature>
<feature type="domain" description="N-acetyltransferase" evidence="1">
    <location>
        <begin position="181"/>
        <end position="254"/>
    </location>
</feature>
<feature type="binding site" evidence="5 21">
    <location>
        <begin position="181"/>
        <end position="183"/>
    </location>
    <ligand>
        <name>acetyl-CoA</name>
        <dbReference type="ChEBI" id="CHEBI:57288"/>
    </ligand>
</feature>
<feature type="binding site" evidence="5 21">
    <location>
        <begin position="189"/>
        <end position="193"/>
    </location>
    <ligand>
        <name>acetyl-CoA</name>
        <dbReference type="ChEBI" id="CHEBI:57288"/>
    </ligand>
</feature>
<feature type="site" description="Has a role in the catalytic activity" evidence="6">
    <location>
        <position position="82"/>
    </location>
</feature>
<feature type="site" description="Might be involved in substrate binding" evidence="6">
    <location>
        <position position="99"/>
    </location>
</feature>
<feature type="site" description="Regulates binding affinity for coenzyme A (CoASH)" evidence="6">
    <location>
        <position position="188"/>
    </location>
</feature>
<feature type="site" description="Has a role in the catalytic activity" evidence="6">
    <location>
        <position position="217"/>
    </location>
</feature>
<feature type="site" description="Has a role in the catalytic activity" evidence="6">
    <location>
        <position position="221"/>
    </location>
</feature>
<feature type="site" description="Acetyl-CoA" evidence="5 21">
    <location>
        <position position="227"/>
    </location>
</feature>
<feature type="splice variant" id="VSP_043741" description="In isoform A." evidence="12 15">
    <location>
        <begin position="1"/>
        <end position="35"/>
    </location>
</feature>
<feature type="mutagenesis site" description="Reduces catalytic activity towards tryptamine." evidence="5 6">
    <original>E</original>
    <variation>A</variation>
    <location>
        <position position="82"/>
    </location>
</feature>
<feature type="mutagenesis site" description="Reduces catalytic activity." evidence="6">
    <original>P</original>
    <variation>A</variation>
    <location>
        <position position="83"/>
    </location>
</feature>
<feature type="mutagenesis site" description="Reduces catalytic activity." evidence="6">
    <original>Y</original>
    <variation>A</variation>
    <location>
        <position position="99"/>
    </location>
</feature>
<feature type="mutagenesis site" description="Does not affect catalytic activity." evidence="6">
    <original>D</original>
    <variation>A</variation>
    <location>
        <position position="177"/>
    </location>
</feature>
<feature type="mutagenesis site" description="Reduces catalytic activity." evidence="6">
    <original>R</original>
    <variation>A</variation>
    <location>
        <position position="188"/>
    </location>
</feature>
<feature type="mutagenesis site" description="Does not affect catalytic activity." evidence="6">
    <original>H</original>
    <variation>A</variation>
    <location>
        <position position="213"/>
    </location>
</feature>
<feature type="mutagenesis site" description="Does not affect catalytic activity." evidence="6">
    <original>C</original>
    <variation>A</variation>
    <location>
        <position position="216"/>
    </location>
</feature>
<feature type="mutagenesis site" description="Reduces catalytic activity towards tryptamine." evidence="5 6">
    <original>S</original>
    <variation>A</variation>
    <location>
        <position position="217"/>
    </location>
</feature>
<feature type="mutagenesis site" description="Reduces catalytic activity towards tryptamine." evidence="5 6">
    <original>S</original>
    <variation>A</variation>
    <location>
        <position position="221"/>
    </location>
</feature>
<feature type="mutagenesis site" description="No effect on the catalytic activity towards tryptamine." evidence="5">
    <original>Y</original>
    <variation>A</variation>
    <location>
        <position position="241"/>
    </location>
</feature>
<feature type="mutagenesis site" description="No effect on the catalytic activity towards tryptamine." evidence="5">
    <original>Y</original>
    <variation>F</variation>
    <location>
        <position position="241"/>
    </location>
</feature>
<feature type="mutagenesis site" description="Reduces catalytic activity." evidence="6">
    <original>H</original>
    <variation>A</variation>
    <location>
        <position position="255"/>
    </location>
</feature>
<feature type="strand" evidence="23">
    <location>
        <begin position="57"/>
        <end position="61"/>
    </location>
</feature>
<feature type="helix" evidence="23">
    <location>
        <begin position="64"/>
        <end position="66"/>
    </location>
</feature>
<feature type="helix" evidence="23">
    <location>
        <begin position="67"/>
        <end position="76"/>
    </location>
</feature>
<feature type="helix" evidence="23">
    <location>
        <begin position="78"/>
        <end position="81"/>
    </location>
</feature>
<feature type="helix" evidence="23">
    <location>
        <begin position="83"/>
        <end position="88"/>
    </location>
</feature>
<feature type="helix" evidence="23">
    <location>
        <begin position="94"/>
        <end position="101"/>
    </location>
</feature>
<feature type="helix" evidence="23">
    <location>
        <begin position="104"/>
        <end position="106"/>
    </location>
</feature>
<feature type="strand" evidence="23">
    <location>
        <begin position="110"/>
        <end position="114"/>
    </location>
</feature>
<feature type="strand" evidence="23">
    <location>
        <begin position="119"/>
        <end position="129"/>
    </location>
</feature>
<feature type="helix" evidence="23">
    <location>
        <begin position="140"/>
        <end position="143"/>
    </location>
</feature>
<feature type="helix" evidence="23">
    <location>
        <begin position="147"/>
        <end position="162"/>
    </location>
</feature>
<feature type="helix" evidence="23">
    <location>
        <begin position="165"/>
        <end position="168"/>
    </location>
</feature>
<feature type="strand" evidence="23">
    <location>
        <begin position="173"/>
        <end position="183"/>
    </location>
</feature>
<feature type="helix" evidence="23">
    <location>
        <begin position="185"/>
        <end position="187"/>
    </location>
</feature>
<feature type="helix" evidence="23">
    <location>
        <begin position="192"/>
        <end position="207"/>
    </location>
</feature>
<feature type="strand" evidence="23">
    <location>
        <begin position="211"/>
        <end position="218"/>
    </location>
</feature>
<feature type="helix" evidence="23">
    <location>
        <begin position="219"/>
        <end position="227"/>
    </location>
</feature>
<feature type="strand" evidence="23">
    <location>
        <begin position="231"/>
        <end position="237"/>
    </location>
</feature>
<feature type="helix" evidence="23">
    <location>
        <begin position="238"/>
        <end position="240"/>
    </location>
</feature>
<feature type="helix" evidence="22">
    <location>
        <begin position="243"/>
        <end position="245"/>
    </location>
</feature>
<feature type="helix" evidence="23">
    <location>
        <begin position="253"/>
        <end position="255"/>
    </location>
</feature>
<feature type="strand" evidence="23">
    <location>
        <begin position="257"/>
        <end position="264"/>
    </location>
</feature>
<comment type="function">
    <text evidence="2 6 8 9 10 11">Catalyzes N-acetylation of tryptamine, tyramine, dopamine, serotonin and octopamine (PubMed:25406072, PubMed:7498465, PubMed:8901578). In astrocytes, regulates sleep homeostasis by limiting the accumulation of serotonin and dopamine in the brain upon sleep deprivation (PubMed:10710313, PubMed:32955431). Is not essential for sclerotization (PubMed:9703021).</text>
</comment>
<comment type="catalytic activity">
    <reaction evidence="5 6 9 10 11">
        <text>a 2-arylethylamine + acetyl-CoA = an N-acetyl-2-arylethylamine + CoA + H(+)</text>
        <dbReference type="Rhea" id="RHEA:20497"/>
        <dbReference type="ChEBI" id="CHEBI:15378"/>
        <dbReference type="ChEBI" id="CHEBI:55469"/>
        <dbReference type="ChEBI" id="CHEBI:57287"/>
        <dbReference type="ChEBI" id="CHEBI:57288"/>
        <dbReference type="ChEBI" id="CHEBI:77827"/>
        <dbReference type="EC" id="2.3.1.87"/>
    </reaction>
</comment>
<comment type="catalytic activity">
    <reaction evidence="6 9 10">
        <text>serotonin + acetyl-CoA = N-acetylserotonin + CoA + H(+)</text>
        <dbReference type="Rhea" id="RHEA:25217"/>
        <dbReference type="ChEBI" id="CHEBI:15378"/>
        <dbReference type="ChEBI" id="CHEBI:17697"/>
        <dbReference type="ChEBI" id="CHEBI:57287"/>
        <dbReference type="ChEBI" id="CHEBI:57288"/>
        <dbReference type="ChEBI" id="CHEBI:350546"/>
        <dbReference type="EC" id="2.3.1.87"/>
    </reaction>
    <physiologicalReaction direction="left-to-right" evidence="6 9 10">
        <dbReference type="Rhea" id="RHEA:25218"/>
    </physiologicalReaction>
</comment>
<comment type="catalytic activity">
    <reaction evidence="9 10">
        <text>dopamine + acetyl-CoA = N-acetyldopamine + CoA + H(+)</text>
        <dbReference type="Rhea" id="RHEA:51388"/>
        <dbReference type="ChEBI" id="CHEBI:15378"/>
        <dbReference type="ChEBI" id="CHEBI:57287"/>
        <dbReference type="ChEBI" id="CHEBI:57288"/>
        <dbReference type="ChEBI" id="CHEBI:59905"/>
        <dbReference type="ChEBI" id="CHEBI:125678"/>
    </reaction>
    <physiologicalReaction direction="left-to-right" evidence="9 10">
        <dbReference type="Rhea" id="RHEA:51389"/>
    </physiologicalReaction>
</comment>
<comment type="catalytic activity">
    <reaction evidence="5 6">
        <text>tyramine + acetyl-CoA = N-acetyltyramine + CoA + H(+)</text>
        <dbReference type="Rhea" id="RHEA:66136"/>
        <dbReference type="ChEBI" id="CHEBI:15378"/>
        <dbReference type="ChEBI" id="CHEBI:57287"/>
        <dbReference type="ChEBI" id="CHEBI:57288"/>
        <dbReference type="ChEBI" id="CHEBI:125610"/>
        <dbReference type="ChEBI" id="CHEBI:327995"/>
    </reaction>
</comment>
<comment type="catalytic activity">
    <reaction evidence="6">
        <text>octopamine + acetyl-CoA = N-acetyloctopamine + CoA + H(+)</text>
        <dbReference type="Rhea" id="RHEA:66140"/>
        <dbReference type="ChEBI" id="CHEBI:15378"/>
        <dbReference type="ChEBI" id="CHEBI:57287"/>
        <dbReference type="ChEBI" id="CHEBI:57288"/>
        <dbReference type="ChEBI" id="CHEBI:58025"/>
        <dbReference type="ChEBI" id="CHEBI:125358"/>
    </reaction>
</comment>
<comment type="catalytic activity">
    <reaction evidence="6">
        <text>5-methoxytryptamine + acetyl-CoA = melatonin + CoA + H(+)</text>
        <dbReference type="Rhea" id="RHEA:66144"/>
        <dbReference type="ChEBI" id="CHEBI:15378"/>
        <dbReference type="ChEBI" id="CHEBI:16796"/>
        <dbReference type="ChEBI" id="CHEBI:57287"/>
        <dbReference type="ChEBI" id="CHEBI:57288"/>
        <dbReference type="ChEBI" id="CHEBI:166874"/>
    </reaction>
</comment>
<comment type="catalytic activity">
    <reaction evidence="6">
        <text>2-phenylethylamine + acetyl-CoA = N-(2-phenylethyl)acetamide + CoA + H(+)</text>
        <dbReference type="Rhea" id="RHEA:66148"/>
        <dbReference type="ChEBI" id="CHEBI:15378"/>
        <dbReference type="ChEBI" id="CHEBI:18177"/>
        <dbReference type="ChEBI" id="CHEBI:57287"/>
        <dbReference type="ChEBI" id="CHEBI:57288"/>
        <dbReference type="ChEBI" id="CHEBI:225237"/>
    </reaction>
</comment>
<comment type="catalytic activity">
    <reaction evidence="6">
        <text>noradrenaline + acetyl-CoA = N-acetylnoradrenaline + CoA + H(+)</text>
        <dbReference type="Rhea" id="RHEA:66152"/>
        <dbReference type="ChEBI" id="CHEBI:15378"/>
        <dbReference type="ChEBI" id="CHEBI:57287"/>
        <dbReference type="ChEBI" id="CHEBI:57288"/>
        <dbReference type="ChEBI" id="CHEBI:166875"/>
        <dbReference type="ChEBI" id="CHEBI:166902"/>
    </reaction>
</comment>
<comment type="catalytic activity">
    <reaction evidence="6">
        <text>tyramine + butanoyl-CoA = N-butanoyltyramine + CoA + H(+)</text>
        <dbReference type="Rhea" id="RHEA:66156"/>
        <dbReference type="ChEBI" id="CHEBI:15378"/>
        <dbReference type="ChEBI" id="CHEBI:57287"/>
        <dbReference type="ChEBI" id="CHEBI:57371"/>
        <dbReference type="ChEBI" id="CHEBI:166900"/>
        <dbReference type="ChEBI" id="CHEBI:327995"/>
    </reaction>
</comment>
<comment type="catalytic activity">
    <reaction evidence="6">
        <text>tyramine + hexanoyl-CoA = N-hexanoyltyramine + CoA + H(+)</text>
        <dbReference type="Rhea" id="RHEA:66160"/>
        <dbReference type="ChEBI" id="CHEBI:15378"/>
        <dbReference type="ChEBI" id="CHEBI:57287"/>
        <dbReference type="ChEBI" id="CHEBI:62620"/>
        <dbReference type="ChEBI" id="CHEBI:166901"/>
        <dbReference type="ChEBI" id="CHEBI:327995"/>
    </reaction>
</comment>
<comment type="catalytic activity">
    <reaction evidence="5 6">
        <text>tryptamine + acetyl-CoA = N-acetyltryptamine + CoA + H(+)</text>
        <dbReference type="Rhea" id="RHEA:66196"/>
        <dbReference type="ChEBI" id="CHEBI:15378"/>
        <dbReference type="ChEBI" id="CHEBI:55515"/>
        <dbReference type="ChEBI" id="CHEBI:57287"/>
        <dbReference type="ChEBI" id="CHEBI:57288"/>
        <dbReference type="ChEBI" id="CHEBI:57887"/>
    </reaction>
</comment>
<comment type="catalytic activity">
    <reaction evidence="6">
        <text>dopamine + hexadecanoyl-CoA = N-hexadecanoyl-dopamine + CoA + H(+)</text>
        <dbReference type="Rhea" id="RHEA:51376"/>
        <dbReference type="ChEBI" id="CHEBI:15378"/>
        <dbReference type="ChEBI" id="CHEBI:57287"/>
        <dbReference type="ChEBI" id="CHEBI:57379"/>
        <dbReference type="ChEBI" id="CHEBI:59905"/>
        <dbReference type="ChEBI" id="CHEBI:134058"/>
    </reaction>
    <physiologicalReaction direction="left-to-right" evidence="6">
        <dbReference type="Rhea" id="RHEA:51377"/>
    </physiologicalReaction>
</comment>
<comment type="catalytic activity">
    <reaction evidence="6">
        <text>dopamine + (9Z)-octadecenoyl-CoA = N-(9Z-octadecanoyl)-dopamine + CoA + H(+)</text>
        <dbReference type="Rhea" id="RHEA:51380"/>
        <dbReference type="ChEBI" id="CHEBI:15378"/>
        <dbReference type="ChEBI" id="CHEBI:31883"/>
        <dbReference type="ChEBI" id="CHEBI:57287"/>
        <dbReference type="ChEBI" id="CHEBI:57387"/>
        <dbReference type="ChEBI" id="CHEBI:59905"/>
    </reaction>
    <physiologicalReaction direction="left-to-right" evidence="6">
        <dbReference type="Rhea" id="RHEA:51381"/>
    </physiologicalReaction>
</comment>
<comment type="catalytic activity">
    <reaction evidence="6">
        <text>serotonin + hexadecanoyl-CoA = N-hexadecanoyl-serotonin + CoA + H(+)</text>
        <dbReference type="Rhea" id="RHEA:51384"/>
        <dbReference type="ChEBI" id="CHEBI:15378"/>
        <dbReference type="ChEBI" id="CHEBI:57287"/>
        <dbReference type="ChEBI" id="CHEBI:57379"/>
        <dbReference type="ChEBI" id="CHEBI:134059"/>
        <dbReference type="ChEBI" id="CHEBI:350546"/>
    </reaction>
    <physiologicalReaction direction="left-to-right" evidence="6">
        <dbReference type="Rhea" id="RHEA:51385"/>
    </physiologicalReaction>
</comment>
<comment type="catalytic activity">
    <reaction evidence="6">
        <text>serotonin + (9Z)-octadecenoyl-CoA = N-(9Z-octadecenoyl)-serotonin + CoA + H(+)</text>
        <dbReference type="Rhea" id="RHEA:51392"/>
        <dbReference type="ChEBI" id="CHEBI:15378"/>
        <dbReference type="ChEBI" id="CHEBI:57287"/>
        <dbReference type="ChEBI" id="CHEBI:57387"/>
        <dbReference type="ChEBI" id="CHEBI:134064"/>
        <dbReference type="ChEBI" id="CHEBI:350546"/>
    </reaction>
    <physiologicalReaction direction="left-to-right" evidence="6">
        <dbReference type="Rhea" id="RHEA:51393"/>
    </physiologicalReaction>
</comment>
<comment type="catalytic activity">
    <reaction evidence="6">
        <text>serotonin + octadecanoyl-CoA = N-octadecanoyl-serotonin + CoA + H(+)</text>
        <dbReference type="Rhea" id="RHEA:51400"/>
        <dbReference type="ChEBI" id="CHEBI:15378"/>
        <dbReference type="ChEBI" id="CHEBI:57287"/>
        <dbReference type="ChEBI" id="CHEBI:57394"/>
        <dbReference type="ChEBI" id="CHEBI:134065"/>
        <dbReference type="ChEBI" id="CHEBI:350546"/>
    </reaction>
    <physiologicalReaction direction="left-to-right" evidence="6">
        <dbReference type="Rhea" id="RHEA:51401"/>
    </physiologicalReaction>
</comment>
<comment type="catalytic activity">
    <reaction evidence="6">
        <text>serotonin + (5Z,8Z,11Z,14Z)-eicosatetraenoyl-CoA = N-[(5Z,8Z,11Z,14Z)-eicosatetraenoyl]-serotonin + CoA + H(+)</text>
        <dbReference type="Rhea" id="RHEA:51396"/>
        <dbReference type="ChEBI" id="CHEBI:15378"/>
        <dbReference type="ChEBI" id="CHEBI:57287"/>
        <dbReference type="ChEBI" id="CHEBI:57368"/>
        <dbReference type="ChEBI" id="CHEBI:132255"/>
        <dbReference type="ChEBI" id="CHEBI:350546"/>
    </reaction>
    <physiologicalReaction direction="left-to-right" evidence="6">
        <dbReference type="Rhea" id="RHEA:51397"/>
    </physiologicalReaction>
</comment>
<comment type="activity regulation">
    <text evidence="6">Inhibited by long-chain acyl-CoA thioesters, oleoyl-CoA (an analog of acetyl-CoA) and tyrosol (an analog of tyramine).</text>
</comment>
<comment type="biophysicochemical properties">
    <kinetics>
        <KM evidence="9 10">0.19 mM for tryptamine (in transfected COS-7 cell extracts)</KM>
        <KM evidence="9 10">0.89 mM for tryptamine (using purified enzyme from flies after hydroxylapatite chromatography)</KM>
        <KM evidence="9 10">1.15 mM for dopamine (in transfected COS-7 cell extracts)</KM>
        <KM evidence="9 10">0.97 mM for dopamine (using purified enzyme from flies after hydroxylapatite chromatography)</KM>
        <KM evidence="9 10">1.62 mM for serotonin (in transfected COS-7 cell extracts)</KM>
        <KM evidence="9 10">0.91 mM for serotonin (using purified enzyme from flies after hydroxylapatite chromatography)</KM>
        <KM evidence="5">0.47 mM for tryptamine (at pH 7.2 and with acetyl-CoA as cosubstrate)</KM>
        <KM evidence="5">0.43 mM for acetyl-CoA (at pH 7.2 and with tryptamine as cosubstrate)</KM>
        <Vmax evidence="9 10">11.5 nmol/h/mg enzyme toward tryptamine (in transfected COS-7 cells)</Vmax>
        <Vmax evidence="9 10">1010.0 umol/h/mg enzyme toward tryptamine (using purified enzyme from flies after hydroxylapatite chromatography)</Vmax>
        <text evidence="5">kcat is 21.9 sec(-1) with tryptamine and acetyl-CoA as substrate (at pH 7.2).</text>
    </kinetics>
    <temperatureDependence>
        <text evidence="9 10">Optimum temperature is 37 degrees Celsius. Retains 84% of activity when incubated at 4 degrees Celsius for 3 days.</text>
    </temperatureDependence>
</comment>
<comment type="biophysicochemical properties">
    <molecule>Isoform A</molecule>
    <kinetics>
        <KM evidence="6">80 uM for benzoyl-CoA (at pH 8 and with tyramine as cosubstrate)</KM>
        <KM evidence="6">64 uM for acetyl-CoA (at pH 8 and with tyramine as cosubstrate)</KM>
        <KM evidence="6">19 uM for butyryl-CoA (at pH 8 and with tyramine as cosubstrate)</KM>
        <KM evidence="6">23 uM for hexanoyl-CoA (at pH 8 and with tyramine as cosubstrate)</KM>
    </kinetics>
</comment>
<comment type="biophysicochemical properties">
    <molecule>Isoform B</molecule>
    <kinetics>
        <KM evidence="6">39 uM for acetyl-CoA (at pH 8 and with tyramine as cosubstrate)</KM>
        <KM evidence="6">65 uM for benzoyl-CoA (at pH 8 and with tyramine as cosubstrate)</KM>
        <KM evidence="6">36 uM for butanoyl-CoA (at pH 8 and with tyramine as cosubstrate)</KM>
        <KM evidence="6">23 uM for hexanoyl-CoA (at pH 8 and with tyramine as cosubstrate)</KM>
        <KM evidence="6">18 uM for octanoyl-CoA (at pH 8 and with tyramine as cosubstrate)</KM>
        <KM evidence="6">23 uM for decanoyl-CoA (at pH 8 and with tyramine as cosubstrate)</KM>
        <KM evidence="6">12 uM for tyramine (at pH 8 and with acetyl-CoA as cosubstrate)</KM>
        <KM evidence="6">10 uM for octapamine (at pH 8 and with acetyl-CoA as cosubstrate)</KM>
        <KM evidence="6">25 uM for dopamine (at pH 8 and with acetyl-CoA as cosubstrate)</KM>
        <KM evidence="6">33 uM for tryptamine (at pH 8 and with acetyl-CoA as cosubstrate)</KM>
        <KM evidence="6">54 uM for 5-methoxytryptamine (at pH 8 and with acetyl-CoA as cosubstrate)</KM>
        <KM evidence="6">32 uM for noradrenaline (at pH 8 and with acetyl-CoA as cosubstrate)</KM>
        <KM evidence="6">56 uM for 2-phenylethylamine (at pH 8 and with acetyl-CoA as cosubstrate)</KM>
        <KM evidence="6">110 uM for serotonin (at pH 8 and with acetyl-CoA as cosubstrate)</KM>
        <text evidence="6">kcat is 19 sec(-1) for tyramine (at pH 8 and with acetyl-CoA as cosubstrate) (PubMed:25406072). kcat is 13 sec(-1) for octapamine (at pH 8 and with acetyl-CoA as cosubstrate) (PubMed:25406072). kcat is 17.6 sec(-1) for dopamine (at pH 8 and with acetyl-CoA as cosubstrate) (PubMed:25406072). kcat is 22 sec(-1) for tryptamine (at pH 8 and with acetyl-CoA as cosubstrate) (PubMed:25406072). kcat is 35 sec(-1) for 5-methoxytryptamine (at pH 8 and with acetyl-CoA as cosubstrate) (PubMed:25406072). kcat is 20 sec(-1) for noradrenaline (at pH 8 and with acetyl-CoA as cosubstrate) (PubMed:25406072). kcat is 30 sec(-1) for 2-phenylethylamine (at pH 8 and with acetyl-CoA as cosubstrate). kcat is 29.7 sec(-1) for serotonin (at pH 8 and with acetyl-CoA as cosubstrate) (PubMed:25406072).</text>
    </kinetics>
</comment>
<comment type="pathway">
    <text evidence="6 9 10 11">Aromatic compound metabolism; melatonin biosynthesis; melatonin from serotonin: step 1/2.</text>
</comment>
<comment type="interaction">
    <interactant intactId="EBI-55572992">
        <id>Q94521</id>
    </interactant>
    <interactant intactId="EBI-56900810">
        <id>Q59E59</id>
        <label>zip</label>
    </interactant>
    <organismsDiffer>false</organismsDiffer>
    <experiments>2</experiments>
</comment>
<comment type="subcellular location">
    <subcellularLocation>
        <location evidence="8">Cytoplasm</location>
    </subcellularLocation>
    <subcellularLocation>
        <location evidence="8">Nucleus</location>
    </subcellularLocation>
    <text evidence="8">In astrocytes, is primarily cytoplasmic, but in neurons is also nuclear.</text>
</comment>
<comment type="alternative products">
    <event type="alternative splicing"/>
    <isoform>
        <id>Q94521-1</id>
        <name evidence="10 11">B</name>
        <name evidence="11">aaNAT1a</name>
        <name evidence="6">AANATA</name>
        <sequence type="displayed"/>
    </isoform>
    <isoform>
        <id>Q94521-2</id>
        <name evidence="11">A</name>
        <name evidence="11">aaNAT1b</name>
        <name evidence="6">AANATB</name>
        <sequence type="described" ref="VSP_043741"/>
    </isoform>
</comment>
<comment type="tissue specificity">
    <text evidence="8 11">In the adult, expressed in the midgut portion of the thoracic segments and the frontal half of the abdomen (at protein level) (PubMed:9703021). Expressed in the epithelial cell layer facing the lumen of the gut (at protein level) (PubMed:9703021). In the brain, expressed in a sub-populations of neurons and astrocytes, and in a set of distinct stripes in the optic lobes (at protein level) (PubMed:32955431, PubMed:9703021). Expressed mainly in serotonergic neurons but also in subsets of glutamatergic, GABAergic and cholinergic neurons (at protein level) (PubMed:32955431).</text>
</comment>
<comment type="developmental stage">
    <molecule>Isoform B</molecule>
    <text evidence="10 11">Detected in late pupal stages and in adult (at protein level).</text>
</comment>
<comment type="developmental stage">
    <molecule>Isoform A</molecule>
    <text evidence="11">Detected from 8h up to the adult stage at relatively constant levels (at protein level) (PubMed:9703021). From 16 hours embryo, detected in cells of the brain, the ventral nerve cord, and the midgut (PubMed:9703021).</text>
</comment>
<comment type="developmental stage">
    <text evidence="8 10">Expressed in the embryonic central nervous system (at protein level) (PubMed:32955431). First detected in stage 14 embryos in cells of the future proventriculus (PubMed:8901578). From stage 15 onwards, strongly expressed in the proventriculus as well as in endodermal cells of the anterior and posterior midgut, whereas the remainder of the midgut shows only very weak expression (PubMed:8901578). No expression is observed in the cells of the developing gastric caeca (PubMed:8901578). Expression in the ventral cord and the brain is nonsegmental (PubMed:8901578).</text>
</comment>
<comment type="induction">
    <text evidence="10 11">Expression at the transcriptional or the translational level is not regulated in a circadian fashion.</text>
</comment>
<comment type="disruption phenotype">
    <text evidence="7 8">Has a darker body color (PubMed:32709620). Shows ectopic pigmentation in the wing hinge, the posterior pupal case, leg joints and cuticular sutures (PubMed:32709620). RNAi-mediated knockdown in astrocytes, does not affect numbers of astrocytes present in the brain (PubMed:32955431). Shows normal baseline patterns and amounts of daytime and nighttime sleep, but while awake are less active (PubMed:32955431). Upon overnight mechanical sleep deprivation, results in increased recovery sleep next day (PubMed:32955431). RNAi-mediated knockdown in neurons results in normal patterns of baseline sleep (PubMed:32955431). Shows lower levels of activity while awake during daytime (PubMed:32955431). During the night, increases duration of sleep bouts and decrease their numbers, suggesting improved sleep consolidation at night (PubMed:32955431). Do not display enhanced recovery sleep the next day following overnight mechanical sleep deprivation (PubMed:32955431).</text>
</comment>
<comment type="disruption phenotype">
    <molecule>Isoform A</molecule>
    <text evidence="2 8">Does not affect the percentage or circadian distribution of rest and waking (PubMed:10710313, PubMed:32955431). Shows normal amounts and pattern of activity (PubMed:10710313, PubMed:32955431). Increases homeostatic sleep following deprivation (PubMed:10710313, PubMed:32955431). Reduces catabolism of serotonin and dopamine in the brains in response to sleep deprivation, leading to inappropriate accumulation of these monoamines (PubMed:32955431).</text>
</comment>
<comment type="similarity">
    <text evidence="16">Belongs to the acetyltransferase family. AANAT subfamily.</text>
</comment>
<keyword id="KW-0002">3D-structure</keyword>
<keyword id="KW-0012">Acyltransferase</keyword>
<keyword id="KW-0025">Alternative splicing</keyword>
<keyword id="KW-0963">Cytoplasm</keyword>
<keyword id="KW-0903">Direct protein sequencing</keyword>
<keyword id="KW-0471">Melatonin biosynthesis</keyword>
<keyword id="KW-0539">Nucleus</keyword>
<keyword id="KW-1185">Reference proteome</keyword>
<keyword id="KW-0808">Transferase</keyword>
<sequence length="275" mass="30976">MEVQKLPDQSLISSMMLDSRCGLNDLYPIARLTQKMEDALTVSGKPAACPVDQDCPYTIELIQPEDGEAVIAMLKTFFFKDEPLNTFLDLGECKELEKYSLKPLPDNCSYKAVNKKGEIIGVFLNGLMRRPSPDDVPEKAADSCEHPKFKKILSLMDHVEEQFNIFDVYPDEELILDGKILSVDTNYRGLGIAGRLTERAYEYMRENGINVYHVLCSSHYSARVMEKLGFHEVFRMQFADYKPQGEVVFKPAAPHVGIQVMAKEVGPAKAAQTKL</sequence>
<dbReference type="EC" id="2.3.1.87" evidence="5 6 9 10 11"/>
<dbReference type="EMBL" id="Y07964">
    <property type="protein sequence ID" value="CAA69262.1"/>
    <property type="molecule type" value="mRNA"/>
</dbReference>
<dbReference type="EMBL" id="AE013599">
    <property type="protein sequence ID" value="AAF47172.1"/>
    <property type="molecule type" value="Genomic_DNA"/>
</dbReference>
<dbReference type="EMBL" id="AE013599">
    <property type="protein sequence ID" value="AAM68307.1"/>
    <property type="molecule type" value="Genomic_DNA"/>
</dbReference>
<dbReference type="EMBL" id="AY118780">
    <property type="protein sequence ID" value="AAM50640.1"/>
    <property type="molecule type" value="mRNA"/>
</dbReference>
<dbReference type="RefSeq" id="NP_001401022.1">
    <molecule id="Q94521-1"/>
    <property type="nucleotide sequence ID" value="NM_001414080.1"/>
</dbReference>
<dbReference type="RefSeq" id="NP_523839.2">
    <molecule id="Q94521-2"/>
    <property type="nucleotide sequence ID" value="NM_079115.3"/>
</dbReference>
<dbReference type="RefSeq" id="NP_995934.1">
    <molecule id="Q94521-1"/>
    <property type="nucleotide sequence ID" value="NM_206212.2"/>
</dbReference>
<dbReference type="PDB" id="3TE4">
    <property type="method" value="X-ray"/>
    <property type="resolution" value="1.46 A"/>
    <property type="chains" value="A=56-265"/>
</dbReference>
<dbReference type="PDB" id="3V8I">
    <property type="method" value="X-ray"/>
    <property type="resolution" value="1.80 A"/>
    <property type="chains" value="A/B=56-265"/>
</dbReference>
<dbReference type="PDB" id="5GI5">
    <property type="method" value="X-ray"/>
    <property type="resolution" value="1.45 A"/>
    <property type="chains" value="A=56-265"/>
</dbReference>
<dbReference type="PDB" id="5GI6">
    <property type="method" value="X-ray"/>
    <property type="resolution" value="1.65 A"/>
    <property type="chains" value="A=56-265"/>
</dbReference>
<dbReference type="PDB" id="5GI7">
    <property type="method" value="X-ray"/>
    <property type="resolution" value="1.20 A"/>
    <property type="chains" value="A=56-265"/>
</dbReference>
<dbReference type="PDB" id="5GI8">
    <property type="method" value="X-ray"/>
    <property type="resolution" value="1.30 A"/>
    <property type="chains" value="A=56-265"/>
</dbReference>
<dbReference type="PDB" id="5GI9">
    <property type="method" value="X-ray"/>
    <property type="resolution" value="1.40 A"/>
    <property type="chains" value="A=56-265"/>
</dbReference>
<dbReference type="PDB" id="5GIF">
    <property type="method" value="X-ray"/>
    <property type="resolution" value="1.30 A"/>
    <property type="chains" value="A=56-265"/>
</dbReference>
<dbReference type="PDB" id="5GIG">
    <property type="method" value="X-ray"/>
    <property type="resolution" value="1.30 A"/>
    <property type="chains" value="A=56-265"/>
</dbReference>
<dbReference type="PDB" id="5GIH">
    <property type="method" value="X-ray"/>
    <property type="resolution" value="1.39 A"/>
    <property type="chains" value="A=56-265"/>
</dbReference>
<dbReference type="PDB" id="5GII">
    <property type="method" value="X-ray"/>
    <property type="resolution" value="1.29 A"/>
    <property type="chains" value="A=56-265"/>
</dbReference>
<dbReference type="PDB" id="6K80">
    <property type="method" value="X-ray"/>
    <property type="resolution" value="1.28 A"/>
    <property type="chains" value="A=56-265"/>
</dbReference>
<dbReference type="PDB" id="8WMB">
    <property type="method" value="X-ray"/>
    <property type="resolution" value="1.65 A"/>
    <property type="chains" value="A=56-265"/>
</dbReference>
<dbReference type="PDB" id="8WME">
    <property type="method" value="X-ray"/>
    <property type="resolution" value="2.28 A"/>
    <property type="chains" value="A/B=56-265"/>
</dbReference>
<dbReference type="PDBsum" id="3TE4"/>
<dbReference type="PDBsum" id="3V8I"/>
<dbReference type="PDBsum" id="5GI5"/>
<dbReference type="PDBsum" id="5GI6"/>
<dbReference type="PDBsum" id="5GI7"/>
<dbReference type="PDBsum" id="5GI8"/>
<dbReference type="PDBsum" id="5GI9"/>
<dbReference type="PDBsum" id="5GIF"/>
<dbReference type="PDBsum" id="5GIG"/>
<dbReference type="PDBsum" id="5GIH"/>
<dbReference type="PDBsum" id="5GII"/>
<dbReference type="PDBsum" id="6K80"/>
<dbReference type="PDBsum" id="8WMB"/>
<dbReference type="PDBsum" id="8WME"/>
<dbReference type="SMR" id="Q94521"/>
<dbReference type="BioGRID" id="63445">
    <property type="interactions" value="3"/>
</dbReference>
<dbReference type="FunCoup" id="Q94521">
    <property type="interactions" value="20"/>
</dbReference>
<dbReference type="IntAct" id="Q94521">
    <property type="interactions" value="2"/>
</dbReference>
<dbReference type="STRING" id="7227.FBpp0089101"/>
<dbReference type="PaxDb" id="7227-FBpp0089101"/>
<dbReference type="DNASU" id="37867"/>
<dbReference type="EnsemblMetazoa" id="FBtr0072254">
    <molecule id="Q94521-2"/>
    <property type="protein sequence ID" value="FBpp0072163"/>
    <property type="gene ID" value="FBgn0287831"/>
</dbReference>
<dbReference type="EnsemblMetazoa" id="FBtr0072255">
    <molecule id="Q94521-1"/>
    <property type="protein sequence ID" value="FBpp0089101"/>
    <property type="gene ID" value="FBgn0287831"/>
</dbReference>
<dbReference type="EnsemblMetazoa" id="FBtr0481628">
    <molecule id="Q94521-1"/>
    <property type="protein sequence ID" value="FBpp0428410"/>
    <property type="gene ID" value="FBgn0287831"/>
</dbReference>
<dbReference type="GeneID" id="37867"/>
<dbReference type="KEGG" id="dme:Dmel_CG3318"/>
<dbReference type="UCSC" id="CG3318-RA">
    <property type="organism name" value="d. melanogaster"/>
</dbReference>
<dbReference type="UCSC" id="CG3318-RB">
    <molecule id="Q94521-1"/>
    <property type="organism name" value="d. melanogaster"/>
</dbReference>
<dbReference type="AGR" id="FB:FBgn0287831"/>
<dbReference type="CTD" id="37867"/>
<dbReference type="FlyBase" id="FBgn0287831">
    <property type="gene designation" value="speck"/>
</dbReference>
<dbReference type="VEuPathDB" id="VectorBase:FBgn0287831"/>
<dbReference type="eggNOG" id="ENOG502S2IU">
    <property type="taxonomic scope" value="Eukaryota"/>
</dbReference>
<dbReference type="GeneTree" id="ENSGT00940000164149"/>
<dbReference type="InParanoid" id="Q94521"/>
<dbReference type="OMA" id="VMEKMDF"/>
<dbReference type="OrthoDB" id="41532at2759"/>
<dbReference type="PhylomeDB" id="Q94521"/>
<dbReference type="UniPathway" id="UPA00837">
    <property type="reaction ID" value="UER00815"/>
</dbReference>
<dbReference type="EvolutionaryTrace" id="Q94521"/>
<dbReference type="GenomeRNAi" id="37867"/>
<dbReference type="PRO" id="PR:Q94521"/>
<dbReference type="Proteomes" id="UP000000803">
    <property type="component" value="Chromosome 2R"/>
</dbReference>
<dbReference type="Bgee" id="FBgn0019643">
    <property type="expression patterns" value="Expressed in adult tracheocyte (Drosophila) in insect leg and 198 other cell types or tissues"/>
</dbReference>
<dbReference type="GO" id="GO:0005737">
    <property type="term" value="C:cytoplasm"/>
    <property type="evidence" value="ECO:0000314"/>
    <property type="project" value="FlyBase"/>
</dbReference>
<dbReference type="GO" id="GO:0005634">
    <property type="term" value="C:nucleus"/>
    <property type="evidence" value="ECO:0007669"/>
    <property type="project" value="UniProtKB-SubCell"/>
</dbReference>
<dbReference type="GO" id="GO:0004059">
    <property type="term" value="F:aralkylamine N-acetyltransferase activity"/>
    <property type="evidence" value="ECO:0000314"/>
    <property type="project" value="FlyBase"/>
</dbReference>
<dbReference type="GO" id="GO:0004060">
    <property type="term" value="F:arylamine N-acetyltransferase activity"/>
    <property type="evidence" value="ECO:0000314"/>
    <property type="project" value="FlyBase"/>
</dbReference>
<dbReference type="GO" id="GO:0008080">
    <property type="term" value="F:N-acetyltransferase activity"/>
    <property type="evidence" value="ECO:0000314"/>
    <property type="project" value="FlyBase"/>
</dbReference>
<dbReference type="GO" id="GO:0006584">
    <property type="term" value="P:catecholamine metabolic process"/>
    <property type="evidence" value="ECO:0000314"/>
    <property type="project" value="FlyBase"/>
</dbReference>
<dbReference type="GO" id="GO:0007593">
    <property type="term" value="P:chitin-based cuticle sclerotization"/>
    <property type="evidence" value="ECO:0000315"/>
    <property type="project" value="FlyBase"/>
</dbReference>
<dbReference type="GO" id="GO:0042420">
    <property type="term" value="P:dopamine catabolic process"/>
    <property type="evidence" value="ECO:0000303"/>
    <property type="project" value="FlyBase"/>
</dbReference>
<dbReference type="GO" id="GO:0030187">
    <property type="term" value="P:melatonin biosynthetic process"/>
    <property type="evidence" value="ECO:0007669"/>
    <property type="project" value="UniProtKB-UniPathway"/>
</dbReference>
<dbReference type="GO" id="GO:0046334">
    <property type="term" value="P:octopamine catabolic process"/>
    <property type="evidence" value="ECO:0000303"/>
    <property type="project" value="FlyBase"/>
</dbReference>
<dbReference type="GO" id="GO:0045187">
    <property type="term" value="P:regulation of circadian sleep/wake cycle, sleep"/>
    <property type="evidence" value="ECO:0000304"/>
    <property type="project" value="FlyBase"/>
</dbReference>
<dbReference type="GO" id="GO:0042429">
    <property type="term" value="P:serotonin catabolic process"/>
    <property type="evidence" value="ECO:0000303"/>
    <property type="project" value="FlyBase"/>
</dbReference>
<dbReference type="GO" id="GO:0030431">
    <property type="term" value="P:sleep"/>
    <property type="evidence" value="ECO:0000304"/>
    <property type="project" value="FlyBase"/>
</dbReference>
<dbReference type="CDD" id="cd04301">
    <property type="entry name" value="NAT_SF"/>
    <property type="match status" value="1"/>
</dbReference>
<dbReference type="FunFam" id="3.40.630.30:FF:000046">
    <property type="entry name" value="Dopamine N-acetyltransferase"/>
    <property type="match status" value="1"/>
</dbReference>
<dbReference type="Gene3D" id="3.40.630.30">
    <property type="match status" value="1"/>
</dbReference>
<dbReference type="InterPro" id="IPR016181">
    <property type="entry name" value="Acyl_CoA_acyltransferase"/>
</dbReference>
<dbReference type="InterPro" id="IPR000182">
    <property type="entry name" value="GNAT_dom"/>
</dbReference>
<dbReference type="PANTHER" id="PTHR20905:SF1">
    <property type="entry name" value="AT07410P-RELATED"/>
    <property type="match status" value="1"/>
</dbReference>
<dbReference type="PANTHER" id="PTHR20905">
    <property type="entry name" value="N-ACETYLTRANSFERASE-RELATED"/>
    <property type="match status" value="1"/>
</dbReference>
<dbReference type="Pfam" id="PF13673">
    <property type="entry name" value="Acetyltransf_10"/>
    <property type="match status" value="1"/>
</dbReference>
<dbReference type="SUPFAM" id="SSF55729">
    <property type="entry name" value="Acyl-CoA N-acyltransferases (Nat)"/>
    <property type="match status" value="1"/>
</dbReference>
<dbReference type="PROSITE" id="PS51186">
    <property type="entry name" value="GNAT"/>
    <property type="match status" value="1"/>
</dbReference>
<name>DNAT_DROME</name>